<protein>
    <recommendedName>
        <fullName evidence="1">Small ribosomal subunit protein bS20</fullName>
    </recommendedName>
    <alternativeName>
        <fullName evidence="3">30S ribosomal protein S20</fullName>
    </alternativeName>
</protein>
<feature type="chain" id="PRO_1000081438" description="Small ribosomal subunit protein bS20">
    <location>
        <begin position="1"/>
        <end position="87"/>
    </location>
</feature>
<feature type="region of interest" description="Disordered" evidence="2">
    <location>
        <begin position="1"/>
        <end position="22"/>
    </location>
</feature>
<feature type="compositionally biased region" description="Basic residues" evidence="2">
    <location>
        <begin position="7"/>
        <end position="19"/>
    </location>
</feature>
<evidence type="ECO:0000255" key="1">
    <source>
        <dbReference type="HAMAP-Rule" id="MF_00500"/>
    </source>
</evidence>
<evidence type="ECO:0000256" key="2">
    <source>
        <dbReference type="SAM" id="MobiDB-lite"/>
    </source>
</evidence>
<evidence type="ECO:0000305" key="3"/>
<reference key="1">
    <citation type="journal article" date="2008" name="Genomics">
        <title>Characterization of ST-4821 complex, a unique Neisseria meningitidis clone.</title>
        <authorList>
            <person name="Peng J."/>
            <person name="Yang L."/>
            <person name="Yang F."/>
            <person name="Yang J."/>
            <person name="Yan Y."/>
            <person name="Nie H."/>
            <person name="Zhang X."/>
            <person name="Xiong Z."/>
            <person name="Jiang Y."/>
            <person name="Cheng F."/>
            <person name="Xu X."/>
            <person name="Chen S."/>
            <person name="Sun L."/>
            <person name="Li W."/>
            <person name="Shen Y."/>
            <person name="Shao Z."/>
            <person name="Liang X."/>
            <person name="Xu J."/>
            <person name="Jin Q."/>
        </authorList>
    </citation>
    <scope>NUCLEOTIDE SEQUENCE [LARGE SCALE GENOMIC DNA]</scope>
    <source>
        <strain>053442</strain>
    </source>
</reference>
<dbReference type="EMBL" id="CP000381">
    <property type="protein sequence ID" value="ABX73823.1"/>
    <property type="molecule type" value="Genomic_DNA"/>
</dbReference>
<dbReference type="RefSeq" id="WP_002212556.1">
    <property type="nucleotide sequence ID" value="NC_010120.1"/>
</dbReference>
<dbReference type="SMR" id="A9M260"/>
<dbReference type="GeneID" id="93387558"/>
<dbReference type="KEGG" id="nmn:NMCC_1679"/>
<dbReference type="HOGENOM" id="CLU_160655_4_0_4"/>
<dbReference type="Proteomes" id="UP000001177">
    <property type="component" value="Chromosome"/>
</dbReference>
<dbReference type="GO" id="GO:0005829">
    <property type="term" value="C:cytosol"/>
    <property type="evidence" value="ECO:0007669"/>
    <property type="project" value="TreeGrafter"/>
</dbReference>
<dbReference type="GO" id="GO:0015935">
    <property type="term" value="C:small ribosomal subunit"/>
    <property type="evidence" value="ECO:0007669"/>
    <property type="project" value="TreeGrafter"/>
</dbReference>
<dbReference type="GO" id="GO:0070181">
    <property type="term" value="F:small ribosomal subunit rRNA binding"/>
    <property type="evidence" value="ECO:0007669"/>
    <property type="project" value="TreeGrafter"/>
</dbReference>
<dbReference type="GO" id="GO:0003735">
    <property type="term" value="F:structural constituent of ribosome"/>
    <property type="evidence" value="ECO:0007669"/>
    <property type="project" value="InterPro"/>
</dbReference>
<dbReference type="GO" id="GO:0006412">
    <property type="term" value="P:translation"/>
    <property type="evidence" value="ECO:0007669"/>
    <property type="project" value="UniProtKB-UniRule"/>
</dbReference>
<dbReference type="FunFam" id="1.20.58.110:FF:000001">
    <property type="entry name" value="30S ribosomal protein S20"/>
    <property type="match status" value="1"/>
</dbReference>
<dbReference type="Gene3D" id="1.20.58.110">
    <property type="entry name" value="Ribosomal protein S20"/>
    <property type="match status" value="1"/>
</dbReference>
<dbReference type="HAMAP" id="MF_00500">
    <property type="entry name" value="Ribosomal_bS20"/>
    <property type="match status" value="1"/>
</dbReference>
<dbReference type="InterPro" id="IPR002583">
    <property type="entry name" value="Ribosomal_bS20"/>
</dbReference>
<dbReference type="InterPro" id="IPR036510">
    <property type="entry name" value="Ribosomal_bS20_sf"/>
</dbReference>
<dbReference type="NCBIfam" id="TIGR00029">
    <property type="entry name" value="S20"/>
    <property type="match status" value="1"/>
</dbReference>
<dbReference type="PANTHER" id="PTHR33398">
    <property type="entry name" value="30S RIBOSOMAL PROTEIN S20"/>
    <property type="match status" value="1"/>
</dbReference>
<dbReference type="PANTHER" id="PTHR33398:SF1">
    <property type="entry name" value="SMALL RIBOSOMAL SUBUNIT PROTEIN BS20C"/>
    <property type="match status" value="1"/>
</dbReference>
<dbReference type="Pfam" id="PF01649">
    <property type="entry name" value="Ribosomal_S20p"/>
    <property type="match status" value="1"/>
</dbReference>
<dbReference type="SUPFAM" id="SSF46992">
    <property type="entry name" value="Ribosomal protein S20"/>
    <property type="match status" value="1"/>
</dbReference>
<accession>A9M260</accession>
<keyword id="KW-0687">Ribonucleoprotein</keyword>
<keyword id="KW-0689">Ribosomal protein</keyword>
<keyword id="KW-0694">RNA-binding</keyword>
<keyword id="KW-0699">rRNA-binding</keyword>
<name>RS20_NEIM0</name>
<gene>
    <name evidence="1" type="primary">rpsT</name>
    <name type="ordered locus">NMCC_1679</name>
</gene>
<organism>
    <name type="scientific">Neisseria meningitidis serogroup C (strain 053442)</name>
    <dbReference type="NCBI Taxonomy" id="374833"/>
    <lineage>
        <taxon>Bacteria</taxon>
        <taxon>Pseudomonadati</taxon>
        <taxon>Pseudomonadota</taxon>
        <taxon>Betaproteobacteria</taxon>
        <taxon>Neisseriales</taxon>
        <taxon>Neisseriaceae</taxon>
        <taxon>Neisseria</taxon>
    </lineage>
</organism>
<comment type="function">
    <text evidence="1">Binds directly to 16S ribosomal RNA.</text>
</comment>
<comment type="similarity">
    <text evidence="1">Belongs to the bacterial ribosomal protein bS20 family.</text>
</comment>
<sequence length="87" mass="9508">MANSAQARKRARQSVKQRAHNASLRTAFRTAVKKVLKAVEAGDKAAAQAVYQESVKVIDRIADKGVFHKNKAARHKSRLSAKVKALA</sequence>
<proteinExistence type="inferred from homology"/>